<evidence type="ECO:0000255" key="1">
    <source>
        <dbReference type="HAMAP-Rule" id="MF_01139"/>
    </source>
</evidence>
<keyword id="KW-0460">Magnesium</keyword>
<keyword id="KW-0479">Metal-binding</keyword>
<keyword id="KW-0808">Transferase</keyword>
<gene>
    <name evidence="1" type="primary">uppS</name>
    <name type="ORF">rsib_orf.108</name>
</gene>
<protein>
    <recommendedName>
        <fullName evidence="1">Isoprenyl transferase</fullName>
        <ecNumber evidence="1">2.5.1.-</ecNumber>
    </recommendedName>
</protein>
<sequence>MTNIKHLAIIMDGNARWADQHNLTKSEGHKAGADKIRELLPEFLNLNIPYITLYTFSSENWQRSSTEVDFLIKLLSIYLKTELNNLHKNGVKIKVIGRLTLLSSSLQKQINNAIELTKNNNKITLCIAFSYGSRQEIVDACTKIITSGKKAVSDSDIQHALYDPEMPDVDLLIRPGGVYRISNFLLWQAAYAELYFSPKYWPDFNKYDIQEAINDYSKRKRTFGKR</sequence>
<organism>
    <name type="scientific">Rickettsia sibirica (strain ATCC VR-151 / 246)</name>
    <dbReference type="NCBI Taxonomy" id="272951"/>
    <lineage>
        <taxon>Bacteria</taxon>
        <taxon>Pseudomonadati</taxon>
        <taxon>Pseudomonadota</taxon>
        <taxon>Alphaproteobacteria</taxon>
        <taxon>Rickettsiales</taxon>
        <taxon>Rickettsiaceae</taxon>
        <taxon>Rickettsieae</taxon>
        <taxon>Rickettsia</taxon>
        <taxon>spotted fever group</taxon>
        <taxon>Rickettsia sibirica subgroup</taxon>
    </lineage>
</organism>
<proteinExistence type="inferred from homology"/>
<reference key="1">
    <citation type="submission" date="2003-02" db="EMBL/GenBank/DDBJ databases">
        <authorList>
            <person name="Malek J.A."/>
            <person name="Eremeeva M.E."/>
            <person name="Dasch G.A."/>
        </authorList>
    </citation>
    <scope>NUCLEOTIDE SEQUENCE [LARGE SCALE GENOMIC DNA]</scope>
    <source>
        <strain>ATCC VR-151 / 246</strain>
    </source>
</reference>
<accession>Q7PBU9</accession>
<feature type="chain" id="PRO_0000123664" description="Isoprenyl transferase">
    <location>
        <begin position="1"/>
        <end position="226"/>
    </location>
</feature>
<feature type="active site" evidence="1">
    <location>
        <position position="12"/>
    </location>
</feature>
<feature type="active site" description="Proton acceptor" evidence="1">
    <location>
        <position position="60"/>
    </location>
</feature>
<feature type="binding site" evidence="1">
    <location>
        <position position="12"/>
    </location>
    <ligand>
        <name>Mg(2+)</name>
        <dbReference type="ChEBI" id="CHEBI:18420"/>
    </ligand>
</feature>
<feature type="binding site" evidence="1">
    <location>
        <begin position="13"/>
        <end position="16"/>
    </location>
    <ligand>
        <name>substrate</name>
    </ligand>
</feature>
<feature type="binding site" evidence="1">
    <location>
        <position position="17"/>
    </location>
    <ligand>
        <name>substrate</name>
    </ligand>
</feature>
<feature type="binding site" evidence="1">
    <location>
        <position position="25"/>
    </location>
    <ligand>
        <name>substrate</name>
    </ligand>
</feature>
<feature type="binding site" evidence="1">
    <location>
        <position position="29"/>
    </location>
    <ligand>
        <name>substrate</name>
    </ligand>
</feature>
<feature type="binding site" evidence="1">
    <location>
        <begin position="57"/>
        <end position="59"/>
    </location>
    <ligand>
        <name>substrate</name>
    </ligand>
</feature>
<feature type="binding site" evidence="1">
    <location>
        <position position="61"/>
    </location>
    <ligand>
        <name>substrate</name>
    </ligand>
</feature>
<feature type="binding site" evidence="1">
    <location>
        <position position="63"/>
    </location>
    <ligand>
        <name>substrate</name>
    </ligand>
</feature>
<feature type="binding site" evidence="1">
    <location>
        <position position="174"/>
    </location>
    <ligand>
        <name>substrate</name>
    </ligand>
</feature>
<feature type="binding site" evidence="1">
    <location>
        <begin position="180"/>
        <end position="182"/>
    </location>
    <ligand>
        <name>substrate</name>
    </ligand>
</feature>
<feature type="binding site" evidence="1">
    <location>
        <position position="193"/>
    </location>
    <ligand>
        <name>Mg(2+)</name>
        <dbReference type="ChEBI" id="CHEBI:18420"/>
    </ligand>
</feature>
<comment type="function">
    <text evidence="1">Catalyzes the condensation of isopentenyl diphosphate (IPP) with allylic pyrophosphates generating different type of terpenoids.</text>
</comment>
<comment type="cofactor">
    <cofactor evidence="1">
        <name>Mg(2+)</name>
        <dbReference type="ChEBI" id="CHEBI:18420"/>
    </cofactor>
    <text evidence="1">Binds 2 magnesium ions per subunit.</text>
</comment>
<comment type="subunit">
    <text evidence="1">Homodimer.</text>
</comment>
<comment type="similarity">
    <text evidence="1">Belongs to the UPP synthase family.</text>
</comment>
<name>ISPT_RICS2</name>
<dbReference type="EC" id="2.5.1.-" evidence="1"/>
<dbReference type="EMBL" id="AABW01000001">
    <property type="protein sequence ID" value="EAA25383.1"/>
    <property type="molecule type" value="Genomic_DNA"/>
</dbReference>
<dbReference type="RefSeq" id="WP_004995757.1">
    <property type="nucleotide sequence ID" value="NZ_AABW01000001.1"/>
</dbReference>
<dbReference type="SMR" id="Q7PBU9"/>
<dbReference type="GeneID" id="95362211"/>
<dbReference type="HOGENOM" id="CLU_038505_1_1_5"/>
<dbReference type="Proteomes" id="UP000004455">
    <property type="component" value="Unassembled WGS sequence"/>
</dbReference>
<dbReference type="GO" id="GO:0045547">
    <property type="term" value="F:ditrans,polycis-polyprenyl diphosphate synthase [(2E,6E)-farnesyl diphosphate specific] activity"/>
    <property type="evidence" value="ECO:0007669"/>
    <property type="project" value="TreeGrafter"/>
</dbReference>
<dbReference type="GO" id="GO:0000287">
    <property type="term" value="F:magnesium ion binding"/>
    <property type="evidence" value="ECO:0007669"/>
    <property type="project" value="UniProtKB-UniRule"/>
</dbReference>
<dbReference type="GO" id="GO:0016094">
    <property type="term" value="P:polyprenol biosynthetic process"/>
    <property type="evidence" value="ECO:0007669"/>
    <property type="project" value="TreeGrafter"/>
</dbReference>
<dbReference type="CDD" id="cd00475">
    <property type="entry name" value="Cis_IPPS"/>
    <property type="match status" value="1"/>
</dbReference>
<dbReference type="Gene3D" id="3.40.1180.10">
    <property type="entry name" value="Decaprenyl diphosphate synthase-like"/>
    <property type="match status" value="1"/>
</dbReference>
<dbReference type="HAMAP" id="MF_01139">
    <property type="entry name" value="ISPT"/>
    <property type="match status" value="1"/>
</dbReference>
<dbReference type="InterPro" id="IPR001441">
    <property type="entry name" value="UPP_synth-like"/>
</dbReference>
<dbReference type="InterPro" id="IPR018520">
    <property type="entry name" value="UPP_synth-like_CS"/>
</dbReference>
<dbReference type="InterPro" id="IPR036424">
    <property type="entry name" value="UPP_synth-like_sf"/>
</dbReference>
<dbReference type="NCBIfam" id="TIGR00055">
    <property type="entry name" value="uppS"/>
    <property type="match status" value="1"/>
</dbReference>
<dbReference type="PANTHER" id="PTHR10291:SF0">
    <property type="entry name" value="DEHYDRODOLICHYL DIPHOSPHATE SYNTHASE 2"/>
    <property type="match status" value="1"/>
</dbReference>
<dbReference type="PANTHER" id="PTHR10291">
    <property type="entry name" value="DEHYDRODOLICHYL DIPHOSPHATE SYNTHASE FAMILY MEMBER"/>
    <property type="match status" value="1"/>
</dbReference>
<dbReference type="Pfam" id="PF01255">
    <property type="entry name" value="Prenyltransf"/>
    <property type="match status" value="1"/>
</dbReference>
<dbReference type="SUPFAM" id="SSF64005">
    <property type="entry name" value="Undecaprenyl diphosphate synthase"/>
    <property type="match status" value="1"/>
</dbReference>
<dbReference type="PROSITE" id="PS01066">
    <property type="entry name" value="UPP_SYNTHASE"/>
    <property type="match status" value="1"/>
</dbReference>